<name>E1BS_ADE07</name>
<protein>
    <recommendedName>
        <fullName>E1B protein, small T-antigen</fullName>
    </recommendedName>
    <alternativeName>
        <fullName>E1B 19 kDa protein</fullName>
        <shortName>E1B-19K</shortName>
    </alternativeName>
</protein>
<organism>
    <name type="scientific">Human adenovirus B serotype 7</name>
    <name type="common">HAdV-7</name>
    <name type="synonym">Human adenovirus 7</name>
    <dbReference type="NCBI Taxonomy" id="10519"/>
    <lineage>
        <taxon>Viruses</taxon>
        <taxon>Varidnaviria</taxon>
        <taxon>Bamfordvirae</taxon>
        <taxon>Preplasmiviricota</taxon>
        <taxon>Tectiliviricetes</taxon>
        <taxon>Rowavirales</taxon>
        <taxon>Adenoviridae</taxon>
        <taxon>Mastadenovirus</taxon>
        <taxon>Human mastadenovirus B</taxon>
    </lineage>
</organism>
<organismHost>
    <name type="scientific">Homo sapiens</name>
    <name type="common">Human</name>
    <dbReference type="NCBI Taxonomy" id="9606"/>
</organismHost>
<proteinExistence type="inferred from homology"/>
<comment type="function">
    <text evidence="1">Putative adenovirus Bcl-2 homolog that inhibits apoptosis induced by TNF or FAS pathways, as well as p53-mediated apoptosis. Without E1B 19K function, virus production is compromised because of premature death of host cell. Interacts with Bax protein in cell lysates (By similarity).</text>
</comment>
<comment type="subcellular location">
    <subcellularLocation>
        <location evidence="1">Host cell membrane</location>
    </subcellularLocation>
    <subcellularLocation>
        <location evidence="1">Host nucleus envelope</location>
    </subcellularLocation>
    <subcellularLocation>
        <location evidence="1">Host nucleus lamina</location>
    </subcellularLocation>
    <text evidence="1">Associated with the plasma and nuclear membranes, and with the insoluble nuclear lamina.</text>
</comment>
<comment type="similarity">
    <text evidence="2">Belongs to the adenoviridae E1B 19 kDa protein family.</text>
</comment>
<sequence length="178" mass="20575">MEVWAILEDLRQTRLLLENASDGVSGLWRFWFGGDLARLVFRIKQDYREEFEKLLDDIPGLFEALNLGHQAHFKEKVLSVLDFSTPGRTAAAVAFLTFILDKWIRQTHFSKGYVLDFIAAALWRTWKARRMRTILDYWPVQPLGVAGILRHPPTMPAVLQEEQQEDNPRAGLDPPVEE</sequence>
<accession>P03248</accession>
<reference key="1">
    <citation type="journal article" date="1982" name="Gene">
        <title>Gene organization of the transforming region of adenovirus type 7 DNA.</title>
        <authorList>
            <person name="Dijkema R."/>
            <person name="Dekker B.M.M."/>
            <person name="van Ormondt H."/>
        </authorList>
    </citation>
    <scope>NUCLEOTIDE SEQUENCE [GENOMIC DNA]</scope>
    <source>
        <strain>Gomen</strain>
    </source>
</reference>
<reference key="2">
    <citation type="journal article" date="1984" name="Tumor Res.">
        <title>The nucleotide sequence of the transforming HindIII-I.J fragment of adenovirus type 7 DNA.</title>
        <authorList>
            <person name="Yoshida K."/>
            <person name="Fujinaga K."/>
        </authorList>
    </citation>
    <scope>NUCLEOTIDE SEQUENCE [GENOMIC DNA]</scope>
    <source>
        <strain>Grider</strain>
    </source>
</reference>
<feature type="chain" id="PRO_0000221713" description="E1B protein, small T-antigen">
    <location>
        <begin position="1"/>
        <end position="178"/>
    </location>
</feature>
<feature type="sequence variant" description="In strain: Grider.">
    <original>RE</original>
    <variation>SV</variation>
    <location>
        <begin position="48"/>
        <end position="49"/>
    </location>
</feature>
<feature type="sequence variant" description="In strain: Grider.">
    <original>I</original>
    <variation>S</variation>
    <location>
        <position position="58"/>
    </location>
</feature>
<evidence type="ECO:0000250" key="1"/>
<evidence type="ECO:0000305" key="2"/>
<dbReference type="EMBL" id="X03000">
    <property type="protein sequence ID" value="CAA26762.1"/>
    <property type="molecule type" value="Genomic_DNA"/>
</dbReference>
<dbReference type="EMBL" id="M38648">
    <property type="protein sequence ID" value="AAA42456.1"/>
    <property type="molecule type" value="Genomic_DNA"/>
</dbReference>
<dbReference type="PIR" id="A03815">
    <property type="entry name" value="WMAD21"/>
</dbReference>
<dbReference type="RefSeq" id="AP_000535.1">
    <property type="nucleotide sequence ID" value="AC_000018.1"/>
</dbReference>
<dbReference type="GO" id="GO:0044203">
    <property type="term" value="C:host cell nuclear lamina"/>
    <property type="evidence" value="ECO:0007669"/>
    <property type="project" value="UniProtKB-SubCell"/>
</dbReference>
<dbReference type="GO" id="GO:0020002">
    <property type="term" value="C:host cell plasma membrane"/>
    <property type="evidence" value="ECO:0007669"/>
    <property type="project" value="UniProtKB-SubCell"/>
</dbReference>
<dbReference type="GO" id="GO:0016020">
    <property type="term" value="C:membrane"/>
    <property type="evidence" value="ECO:0007669"/>
    <property type="project" value="UniProtKB-KW"/>
</dbReference>
<dbReference type="GO" id="GO:0033668">
    <property type="term" value="P:symbiont-mediated suppression of host apoptosis"/>
    <property type="evidence" value="ECO:0007669"/>
    <property type="project" value="UniProtKB-KW"/>
</dbReference>
<dbReference type="InterPro" id="IPR002924">
    <property type="entry name" value="Adenovir_t-Ag_E1B_19kDa"/>
</dbReference>
<dbReference type="InterPro" id="IPR002475">
    <property type="entry name" value="Bcl2-like"/>
</dbReference>
<dbReference type="Pfam" id="PF01691">
    <property type="entry name" value="Adeno_E1B_19K"/>
    <property type="match status" value="1"/>
</dbReference>
<dbReference type="PROSITE" id="PS50062">
    <property type="entry name" value="BCL2_FAMILY"/>
    <property type="match status" value="1"/>
</dbReference>
<keyword id="KW-0053">Apoptosis</keyword>
<keyword id="KW-0244">Early protein</keyword>
<keyword id="KW-1032">Host cell membrane</keyword>
<keyword id="KW-1043">Host membrane</keyword>
<keyword id="KW-1048">Host nucleus</keyword>
<keyword id="KW-0945">Host-virus interaction</keyword>
<keyword id="KW-1081">Inhibition of host apoptosis by viral BCL2-like protein</keyword>
<keyword id="KW-0472">Membrane</keyword>
<keyword id="KW-1119">Modulation of host cell apoptosis by virus</keyword>